<reference key="1">
    <citation type="journal article" date="1997" name="J. Cell Biol.">
        <title>Synaptopodin: an actin-associated protein in telencephalic dendrites and renal podocytes.</title>
        <authorList>
            <person name="Mundel P."/>
            <person name="Heid H.W."/>
            <person name="Mundel T.M."/>
            <person name="Krueger M."/>
            <person name="Reiser J."/>
            <person name="Kriz W."/>
        </authorList>
    </citation>
    <scope>NUCLEOTIDE SEQUENCE (ISOFORM 3)</scope>
    <scope>TISSUE SPECIFICITY</scope>
    <scope>SUBCELLULAR LOCATION</scope>
    <scope>DEVELOPMENTAL STAGE</scope>
    <source>
        <tissue>Hippocampus</tissue>
    </source>
</reference>
<reference key="2">
    <citation type="journal article" date="2004" name="Nature">
        <title>Genome sequence of the Brown Norway rat yields insights into mammalian evolution.</title>
        <authorList>
            <person name="Gibbs R.A."/>
            <person name="Weinstock G.M."/>
            <person name="Metzker M.L."/>
            <person name="Muzny D.M."/>
            <person name="Sodergren E.J."/>
            <person name="Scherer S."/>
            <person name="Scott G."/>
            <person name="Steffen D."/>
            <person name="Worley K.C."/>
            <person name="Burch P.E."/>
            <person name="Okwuonu G."/>
            <person name="Hines S."/>
            <person name="Lewis L."/>
            <person name="Deramo C."/>
            <person name="Delgado O."/>
            <person name="Dugan-Rocha S."/>
            <person name="Miner G."/>
            <person name="Morgan M."/>
            <person name="Hawes A."/>
            <person name="Gill R."/>
            <person name="Holt R.A."/>
            <person name="Adams M.D."/>
            <person name="Amanatides P.G."/>
            <person name="Baden-Tillson H."/>
            <person name="Barnstead M."/>
            <person name="Chin S."/>
            <person name="Evans C.A."/>
            <person name="Ferriera S."/>
            <person name="Fosler C."/>
            <person name="Glodek A."/>
            <person name="Gu Z."/>
            <person name="Jennings D."/>
            <person name="Kraft C.L."/>
            <person name="Nguyen T."/>
            <person name="Pfannkoch C.M."/>
            <person name="Sitter C."/>
            <person name="Sutton G.G."/>
            <person name="Venter J.C."/>
            <person name="Woodage T."/>
            <person name="Smith D."/>
            <person name="Lee H.-M."/>
            <person name="Gustafson E."/>
            <person name="Cahill P."/>
            <person name="Kana A."/>
            <person name="Doucette-Stamm L."/>
            <person name="Weinstock K."/>
            <person name="Fechtel K."/>
            <person name="Weiss R.B."/>
            <person name="Dunn D.M."/>
            <person name="Green E.D."/>
            <person name="Blakesley R.W."/>
            <person name="Bouffard G.G."/>
            <person name="De Jong P.J."/>
            <person name="Osoegawa K."/>
            <person name="Zhu B."/>
            <person name="Marra M."/>
            <person name="Schein J."/>
            <person name="Bosdet I."/>
            <person name="Fjell C."/>
            <person name="Jones S."/>
            <person name="Krzywinski M."/>
            <person name="Mathewson C."/>
            <person name="Siddiqui A."/>
            <person name="Wye N."/>
            <person name="McPherson J."/>
            <person name="Zhao S."/>
            <person name="Fraser C.M."/>
            <person name="Shetty J."/>
            <person name="Shatsman S."/>
            <person name="Geer K."/>
            <person name="Chen Y."/>
            <person name="Abramzon S."/>
            <person name="Nierman W.C."/>
            <person name="Havlak P.H."/>
            <person name="Chen R."/>
            <person name="Durbin K.J."/>
            <person name="Egan A."/>
            <person name="Ren Y."/>
            <person name="Song X.-Z."/>
            <person name="Li B."/>
            <person name="Liu Y."/>
            <person name="Qin X."/>
            <person name="Cawley S."/>
            <person name="Cooney A.J."/>
            <person name="D'Souza L.M."/>
            <person name="Martin K."/>
            <person name="Wu J.Q."/>
            <person name="Gonzalez-Garay M.L."/>
            <person name="Jackson A.R."/>
            <person name="Kalafus K.J."/>
            <person name="McLeod M.P."/>
            <person name="Milosavljevic A."/>
            <person name="Virk D."/>
            <person name="Volkov A."/>
            <person name="Wheeler D.A."/>
            <person name="Zhang Z."/>
            <person name="Bailey J.A."/>
            <person name="Eichler E.E."/>
            <person name="Tuzun E."/>
            <person name="Birney E."/>
            <person name="Mongin E."/>
            <person name="Ureta-Vidal A."/>
            <person name="Woodwark C."/>
            <person name="Zdobnov E."/>
            <person name="Bork P."/>
            <person name="Suyama M."/>
            <person name="Torrents D."/>
            <person name="Alexandersson M."/>
            <person name="Trask B.J."/>
            <person name="Young J.M."/>
            <person name="Huang H."/>
            <person name="Wang H."/>
            <person name="Xing H."/>
            <person name="Daniels S."/>
            <person name="Gietzen D."/>
            <person name="Schmidt J."/>
            <person name="Stevens K."/>
            <person name="Vitt U."/>
            <person name="Wingrove J."/>
            <person name="Camara F."/>
            <person name="Mar Alba M."/>
            <person name="Abril J.F."/>
            <person name="Guigo R."/>
            <person name="Smit A."/>
            <person name="Dubchak I."/>
            <person name="Rubin E.M."/>
            <person name="Couronne O."/>
            <person name="Poliakov A."/>
            <person name="Huebner N."/>
            <person name="Ganten D."/>
            <person name="Goesele C."/>
            <person name="Hummel O."/>
            <person name="Kreitler T."/>
            <person name="Lee Y.-A."/>
            <person name="Monti J."/>
            <person name="Schulz H."/>
            <person name="Zimdahl H."/>
            <person name="Himmelbauer H."/>
            <person name="Lehrach H."/>
            <person name="Jacob H.J."/>
            <person name="Bromberg S."/>
            <person name="Gullings-Handley J."/>
            <person name="Jensen-Seaman M.I."/>
            <person name="Kwitek A.E."/>
            <person name="Lazar J."/>
            <person name="Pasko D."/>
            <person name="Tonellato P.J."/>
            <person name="Twigger S."/>
            <person name="Ponting C.P."/>
            <person name="Duarte J.M."/>
            <person name="Rice S."/>
            <person name="Goodstadt L."/>
            <person name="Beatson S.A."/>
            <person name="Emes R.D."/>
            <person name="Winter E.E."/>
            <person name="Webber C."/>
            <person name="Brandt P."/>
            <person name="Nyakatura G."/>
            <person name="Adetobi M."/>
            <person name="Chiaromonte F."/>
            <person name="Elnitski L."/>
            <person name="Eswara P."/>
            <person name="Hardison R.C."/>
            <person name="Hou M."/>
            <person name="Kolbe D."/>
            <person name="Makova K."/>
            <person name="Miller W."/>
            <person name="Nekrutenko A."/>
            <person name="Riemer C."/>
            <person name="Schwartz S."/>
            <person name="Taylor J."/>
            <person name="Yang S."/>
            <person name="Zhang Y."/>
            <person name="Lindpaintner K."/>
            <person name="Andrews T.D."/>
            <person name="Caccamo M."/>
            <person name="Clamp M."/>
            <person name="Clarke L."/>
            <person name="Curwen V."/>
            <person name="Durbin R.M."/>
            <person name="Eyras E."/>
            <person name="Searle S.M."/>
            <person name="Cooper G.M."/>
            <person name="Batzoglou S."/>
            <person name="Brudno M."/>
            <person name="Sidow A."/>
            <person name="Stone E.A."/>
            <person name="Payseur B.A."/>
            <person name="Bourque G."/>
            <person name="Lopez-Otin C."/>
            <person name="Puente X.S."/>
            <person name="Chakrabarti K."/>
            <person name="Chatterji S."/>
            <person name="Dewey C."/>
            <person name="Pachter L."/>
            <person name="Bray N."/>
            <person name="Yap V.B."/>
            <person name="Caspi A."/>
            <person name="Tesler G."/>
            <person name="Pevzner P.A."/>
            <person name="Haussler D."/>
            <person name="Roskin K.M."/>
            <person name="Baertsch R."/>
            <person name="Clawson H."/>
            <person name="Furey T.S."/>
            <person name="Hinrichs A.S."/>
            <person name="Karolchik D."/>
            <person name="Kent W.J."/>
            <person name="Rosenbloom K.R."/>
            <person name="Trumbower H."/>
            <person name="Weirauch M."/>
            <person name="Cooper D.N."/>
            <person name="Stenson P.D."/>
            <person name="Ma B."/>
            <person name="Brent M."/>
            <person name="Arumugam M."/>
            <person name="Shteynberg D."/>
            <person name="Copley R.R."/>
            <person name="Taylor M.S."/>
            <person name="Riethman H."/>
            <person name="Mudunuri U."/>
            <person name="Peterson J."/>
            <person name="Guyer M."/>
            <person name="Felsenfeld A."/>
            <person name="Old S."/>
            <person name="Mockrin S."/>
            <person name="Collins F.S."/>
        </authorList>
    </citation>
    <scope>NUCLEOTIDE SEQUENCE [LARGE SCALE GENOMIC DNA]</scope>
    <source>
        <strain>Brown Norway</strain>
    </source>
</reference>
<reference key="3">
    <citation type="journal article" date="2001" name="J. Neurochem.">
        <title>Regulated expression of an actin-associated protein, synaptopodin, during long-term potentiation.</title>
        <authorList>
            <person name="Yamazaki M."/>
            <person name="Matsuo R."/>
            <person name="Fukazawa Y."/>
            <person name="Ozawa F."/>
            <person name="Inokuchi K."/>
        </authorList>
    </citation>
    <scope>FUNCTION</scope>
    <scope>INDUCTION</scope>
    <scope>SUBCELLULAR LOCATION</scope>
    <scope>TISSUE SPECIFICITY</scope>
</reference>
<reference key="4">
    <citation type="journal article" date="2012" name="Nat. Commun.">
        <title>Quantitative maps of protein phosphorylation sites across 14 different rat organs and tissues.</title>
        <authorList>
            <person name="Lundby A."/>
            <person name="Secher A."/>
            <person name="Lage K."/>
            <person name="Nordsborg N.B."/>
            <person name="Dmytriyev A."/>
            <person name="Lundby C."/>
            <person name="Olsen J.V."/>
        </authorList>
    </citation>
    <scope>PHOSPHORYLATION [LARGE SCALE ANALYSIS] AT SER-258; SER-490; SER-514; THR-549; SER-767 AND SER-835</scope>
    <scope>IDENTIFICATION BY MASS SPECTROMETRY [LARGE SCALE ANALYSIS]</scope>
</reference>
<sequence length="931" mass="99986">MLGTHFPPPPLGPSEGRAAPCTFQIPDGSYRCLALEAEESSSEDGLQGEVRLVDLEEEGTSKSRVNHGTPPLSRAPAIIQPSSCCREARGGFQHSDKPSREWDVVQARKVMTASVSSSPVPRVAQKPALGRSTSFTEKDLKEAKERSQRIAAQLTTPPSSNSRGVQLFNRRRQRVNEFTLESRGQRSPKLSQEALQTGHPSSPIGHAPGLSVNPTSPSKPGSPKHSSSQSPSRGVPGHIMEGYSEEASLLRHLEKVASEEEEVPLVVYLKENAALLTANGLHLSQNRETQQSSPNPPETEEVPSPAADINQNPSSPNATLTTAASNSHHNQPTADVNQNPPATITPVQQNSSETQCSPNGTLDSKPNTPSADDGQRPVPAEEVRSSILLIDKVSAPPSAASPFSREATPLSSSGPPAADLMSSSLLIGMQPSTLVASAEQEVSGHAAVTTPTKVYSEVHLTLAKPASVVNRTARPFGMQSPGTTSQIEQSPMMGRRHFGEKAWAPPASSMADRSPQPQRHIMARSPMVERRLVGQRSPVVERRPLGNFTPPPTYAETLSTAPVASQVRSPPSYSTLYPSSDPKPPHLKGQVVPANKTGILEESMARRGSRKSMFTFVEKPKVTPNPDLLDLVQTADEKRRQRDQGEVGMEDEPFALGAEASNFQQEPIARDRSGPAAAEETVPEWASCLKSPRIQAKPKPKPNQNLSEASGKGAELYARRQSRMEKYVIESSGHAELARCPSPTMSLPSSWKYTTNAPGGFRVASLSPARTPPASLYHGYLPENGVLRPEPTKQQPHQMRPSLYALSPVKEPAKISSRATSSRASSRTVSPRAASPAKPSSLDLVPNLPRAGLPPSPALPRPSRSSPGLYNAPVQDSLQPTAVSPTYSSDISPVSPSRAWSPRAKQAPRPSFSTRNAGIEAQVWKPSFCFK</sequence>
<comment type="function">
    <text evidence="5">Actin-associated protein that may play a role in modulating actin-based shape and motility of dendritic spines and renal podocyte foot processes. Seems to be essential for the formation of spine apparatuses in spines of telencephalic neurons, which is involved in synaptic plasticity.</text>
</comment>
<comment type="subunit">
    <text evidence="1">Interacts with BAIAP1. Interacts with actin. Interacts (via PPxY motifs) with WWC1 (via WW domains) (By similarity).</text>
</comment>
<comment type="subcellular location">
    <subcellularLocation>
        <location evidence="5 6">Cytoplasm</location>
        <location evidence="5 6">Cytoskeleton</location>
    </subcellularLocation>
    <subcellularLocation>
        <location evidence="6">Cell junction</location>
        <location evidence="6">Tight junction</location>
    </subcellularLocation>
    <subcellularLocation>
        <location>Perikaryon</location>
    </subcellularLocation>
    <subcellularLocation>
        <location evidence="6">Cell projection</location>
        <location evidence="6">Dendritic spine</location>
    </subcellularLocation>
    <subcellularLocation>
        <location evidence="6">Postsynaptic density</location>
    </subcellularLocation>
    <subcellularLocation>
        <location evidence="6">Synapse</location>
    </subcellularLocation>
    <subcellularLocation>
        <location evidence="3">Cytoplasm</location>
        <location evidence="3">Cytosol</location>
    </subcellularLocation>
    <text evidence="6">Localized at the tight junction of cells. In brain, localized to the postsynaptic densities and in the perikarya. Associated with dendritic spines of a subset of synapses (PubMed:9314539).</text>
</comment>
<comment type="alternative products">
    <event type="alternative splicing"/>
    <isoform>
        <id>Q9Z327-1</id>
        <name>1</name>
        <sequence type="displayed"/>
    </isoform>
    <isoform>
        <id>Q9Z327-2</id>
        <name>2</name>
        <sequence type="described" ref="VSP_010480 VSP_010481"/>
    </isoform>
    <isoform>
        <id>Q9Z327-3</id>
        <name>3</name>
        <sequence type="described" ref="VSP_010480"/>
    </isoform>
</comment>
<comment type="tissue specificity">
    <text evidence="5 6">Expressed at high levels in brain and at moderate, but still significant levels in the heart, skeletal muscle, lung and kidney. In brain, expressed in the cerebral cortex, hippocampus, olfactory bulb and striatum.</text>
</comment>
<comment type="developmental stage">
    <text evidence="6">First expressed around day 15, increased thereafter, and reached the maximum level of expression in the adult brain. In vitro, in neurons, expression started at 12 dpc, increased thereafter in parallel with process of spine formation, and reached its maximum level after 25 days.</text>
</comment>
<comment type="induction">
    <text evidence="5">Depends on the long term potentiation (LTP) and the activation of NMDA receptor signaling.</text>
</comment>
<comment type="PTM">
    <text evidence="1">O-glycosylated.</text>
</comment>
<comment type="similarity">
    <text evidence="7">Belongs to the synaptopodin family.</text>
</comment>
<proteinExistence type="evidence at protein level"/>
<gene>
    <name type="primary">Synpo</name>
</gene>
<keyword id="KW-0009">Actin-binding</keyword>
<keyword id="KW-0025">Alternative splicing</keyword>
<keyword id="KW-0965">Cell junction</keyword>
<keyword id="KW-0966">Cell projection</keyword>
<keyword id="KW-0963">Cytoplasm</keyword>
<keyword id="KW-0206">Cytoskeleton</keyword>
<keyword id="KW-0325">Glycoprotein</keyword>
<keyword id="KW-0488">Methylation</keyword>
<keyword id="KW-0597">Phosphoprotein</keyword>
<keyword id="KW-1185">Reference proteome</keyword>
<keyword id="KW-0770">Synapse</keyword>
<keyword id="KW-0796">Tight junction</keyword>
<dbReference type="EMBL" id="AB013130">
    <property type="protein sequence ID" value="BAA34925.1"/>
    <property type="molecule type" value="mRNA"/>
</dbReference>
<dbReference type="EMBL" id="AABR03110007">
    <property type="status" value="NOT_ANNOTATED_CDS"/>
    <property type="molecule type" value="Genomic_DNA"/>
</dbReference>
<dbReference type="RefSeq" id="NP_067727.2">
    <molecule id="Q9Z327-3"/>
    <property type="nucleotide sequence ID" value="NM_021695.2"/>
</dbReference>
<dbReference type="RefSeq" id="XP_017456508.1">
    <property type="nucleotide sequence ID" value="XM_017601019.1"/>
</dbReference>
<dbReference type="SMR" id="Q9Z327"/>
<dbReference type="BioGRID" id="248774">
    <property type="interactions" value="6"/>
</dbReference>
<dbReference type="FunCoup" id="Q9Z327">
    <property type="interactions" value="298"/>
</dbReference>
<dbReference type="IntAct" id="Q9Z327">
    <property type="interactions" value="2"/>
</dbReference>
<dbReference type="MINT" id="Q9Z327"/>
<dbReference type="STRING" id="10116.ENSRNOP00000025934"/>
<dbReference type="GlyGen" id="Q9Z327">
    <property type="glycosylation" value="3 sites, 1 O-linked glycan (2 sites)"/>
</dbReference>
<dbReference type="iPTMnet" id="Q9Z327"/>
<dbReference type="PhosphoSitePlus" id="Q9Z327"/>
<dbReference type="PaxDb" id="10116-ENSRNOP00000025989"/>
<dbReference type="Ensembl" id="ENSRNOT00000064686.2">
    <molecule id="Q9Z327-3"/>
    <property type="protein sequence ID" value="ENSRNOP00000061109.1"/>
    <property type="gene ID" value="ENSRNOG00000019181.6"/>
</dbReference>
<dbReference type="Ensembl" id="ENSRNOT00000102376.1">
    <molecule id="Q9Z327-1"/>
    <property type="protein sequence ID" value="ENSRNOP00000077576.1"/>
    <property type="gene ID" value="ENSRNOG00000019181.6"/>
</dbReference>
<dbReference type="Ensembl" id="ENSRNOT00000103982.1">
    <molecule id="Q9Z327-2"/>
    <property type="protein sequence ID" value="ENSRNOP00000087286.1"/>
    <property type="gene ID" value="ENSRNOG00000019181.6"/>
</dbReference>
<dbReference type="GeneID" id="60324"/>
<dbReference type="KEGG" id="rno:60324"/>
<dbReference type="UCSC" id="RGD:620668">
    <molecule id="Q9Z327-1"/>
    <property type="organism name" value="rat"/>
</dbReference>
<dbReference type="AGR" id="RGD:620668"/>
<dbReference type="CTD" id="11346"/>
<dbReference type="RGD" id="620668">
    <property type="gene designation" value="Synpo"/>
</dbReference>
<dbReference type="eggNOG" id="ENOG502R7RM">
    <property type="taxonomic scope" value="Eukaryota"/>
</dbReference>
<dbReference type="GeneTree" id="ENSGT00950000183054"/>
<dbReference type="HOGENOM" id="CLU_071316_1_0_1"/>
<dbReference type="InParanoid" id="Q9Z327"/>
<dbReference type="PhylomeDB" id="Q9Z327"/>
<dbReference type="TreeFam" id="TF330867"/>
<dbReference type="PRO" id="PR:Q9Z327"/>
<dbReference type="Proteomes" id="UP000002494">
    <property type="component" value="Chromosome 18"/>
</dbReference>
<dbReference type="Bgee" id="ENSRNOG00000019181">
    <property type="expression patterns" value="Expressed in frontal cortex and 18 other cell types or tissues"/>
</dbReference>
<dbReference type="ExpressionAtlas" id="Q9Z327">
    <property type="expression patterns" value="baseline and differential"/>
</dbReference>
<dbReference type="GO" id="GO:0015629">
    <property type="term" value="C:actin cytoskeleton"/>
    <property type="evidence" value="ECO:0000250"/>
    <property type="project" value="UniProtKB"/>
</dbReference>
<dbReference type="GO" id="GO:0005923">
    <property type="term" value="C:bicellular tight junction"/>
    <property type="evidence" value="ECO:0007669"/>
    <property type="project" value="UniProtKB-SubCell"/>
</dbReference>
<dbReference type="GO" id="GO:0071944">
    <property type="term" value="C:cell periphery"/>
    <property type="evidence" value="ECO:0000266"/>
    <property type="project" value="RGD"/>
</dbReference>
<dbReference type="GO" id="GO:0005829">
    <property type="term" value="C:cytosol"/>
    <property type="evidence" value="ECO:0000250"/>
    <property type="project" value="UniProtKB"/>
</dbReference>
<dbReference type="GO" id="GO:0098978">
    <property type="term" value="C:glutamatergic synapse"/>
    <property type="evidence" value="ECO:0000314"/>
    <property type="project" value="SynGO"/>
</dbReference>
<dbReference type="GO" id="GO:0005634">
    <property type="term" value="C:nucleus"/>
    <property type="evidence" value="ECO:0000318"/>
    <property type="project" value="GO_Central"/>
</dbReference>
<dbReference type="GO" id="GO:0043204">
    <property type="term" value="C:perikaryon"/>
    <property type="evidence" value="ECO:0007669"/>
    <property type="project" value="UniProtKB-SubCell"/>
</dbReference>
<dbReference type="GO" id="GO:0005886">
    <property type="term" value="C:plasma membrane"/>
    <property type="evidence" value="ECO:0007669"/>
    <property type="project" value="Ensembl"/>
</dbReference>
<dbReference type="GO" id="GO:0014069">
    <property type="term" value="C:postsynaptic density"/>
    <property type="evidence" value="ECO:0007669"/>
    <property type="project" value="UniProtKB-SubCell"/>
</dbReference>
<dbReference type="GO" id="GO:0098685">
    <property type="term" value="C:Schaffer collateral - CA1 synapse"/>
    <property type="evidence" value="ECO:0000266"/>
    <property type="project" value="RGD"/>
</dbReference>
<dbReference type="GO" id="GO:0097444">
    <property type="term" value="C:spine apparatus"/>
    <property type="evidence" value="ECO:0000314"/>
    <property type="project" value="SynGO"/>
</dbReference>
<dbReference type="GO" id="GO:0001725">
    <property type="term" value="C:stress fiber"/>
    <property type="evidence" value="ECO:0000318"/>
    <property type="project" value="GO_Central"/>
</dbReference>
<dbReference type="GO" id="GO:0030018">
    <property type="term" value="C:Z disc"/>
    <property type="evidence" value="ECO:0000318"/>
    <property type="project" value="GO_Central"/>
</dbReference>
<dbReference type="GO" id="GO:0003779">
    <property type="term" value="F:actin binding"/>
    <property type="evidence" value="ECO:0000250"/>
    <property type="project" value="UniProtKB"/>
</dbReference>
<dbReference type="GO" id="GO:0032233">
    <property type="term" value="P:positive regulation of actin filament bundle assembly"/>
    <property type="evidence" value="ECO:0000266"/>
    <property type="project" value="RGD"/>
</dbReference>
<dbReference type="GO" id="GO:0099170">
    <property type="term" value="P:postsynaptic modulation of chemical synaptic transmission"/>
    <property type="evidence" value="ECO:0000266"/>
    <property type="project" value="RGD"/>
</dbReference>
<dbReference type="GO" id="GO:0048169">
    <property type="term" value="P:regulation of long-term neuronal synaptic plasticity"/>
    <property type="evidence" value="ECO:0000266"/>
    <property type="project" value="RGD"/>
</dbReference>
<dbReference type="GO" id="GO:0099566">
    <property type="term" value="P:regulation of postsynaptic cytosolic calcium ion concentration"/>
    <property type="evidence" value="ECO:0000266"/>
    <property type="project" value="RGD"/>
</dbReference>
<dbReference type="GO" id="GO:1905355">
    <property type="term" value="P:spine apparatus assembly"/>
    <property type="evidence" value="ECO:0000266"/>
    <property type="project" value="RGD"/>
</dbReference>
<dbReference type="GO" id="GO:0008542">
    <property type="term" value="P:visual learning"/>
    <property type="evidence" value="ECO:0000266"/>
    <property type="project" value="RGD"/>
</dbReference>
<dbReference type="InterPro" id="IPR051976">
    <property type="entry name" value="Synaptopodin_domain"/>
</dbReference>
<dbReference type="PANTHER" id="PTHR24217">
    <property type="entry name" value="PUTATIVE-RELATED"/>
    <property type="match status" value="1"/>
</dbReference>
<dbReference type="PANTHER" id="PTHR24217:SF13">
    <property type="entry name" value="SYNAPTOPODIN"/>
    <property type="match status" value="1"/>
</dbReference>
<evidence type="ECO:0000250" key="1"/>
<evidence type="ECO:0000250" key="2">
    <source>
        <dbReference type="UniProtKB" id="Q8CC35"/>
    </source>
</evidence>
<evidence type="ECO:0000250" key="3">
    <source>
        <dbReference type="UniProtKB" id="Q8N3V7"/>
    </source>
</evidence>
<evidence type="ECO:0000256" key="4">
    <source>
        <dbReference type="SAM" id="MobiDB-lite"/>
    </source>
</evidence>
<evidence type="ECO:0000269" key="5">
    <source>
    </source>
</evidence>
<evidence type="ECO:0000269" key="6">
    <source>
    </source>
</evidence>
<evidence type="ECO:0000305" key="7"/>
<evidence type="ECO:0007744" key="8">
    <source>
    </source>
</evidence>
<feature type="chain" id="PRO_0000187672" description="Synaptopodin">
    <location>
        <begin position="1"/>
        <end position="931"/>
    </location>
</feature>
<feature type="region of interest" description="Disordered" evidence="4">
    <location>
        <begin position="56"/>
        <end position="78"/>
    </location>
</feature>
<feature type="region of interest" description="Disordered" evidence="4">
    <location>
        <begin position="113"/>
        <end position="243"/>
    </location>
</feature>
<feature type="region of interest" description="Disordered" evidence="4">
    <location>
        <begin position="280"/>
        <end position="420"/>
    </location>
</feature>
<feature type="region of interest" description="Disordered" evidence="4">
    <location>
        <begin position="542"/>
        <end position="591"/>
    </location>
</feature>
<feature type="region of interest" description="Disordered" evidence="4">
    <location>
        <begin position="691"/>
        <end position="711"/>
    </location>
</feature>
<feature type="region of interest" description="Disordered" evidence="4">
    <location>
        <begin position="775"/>
        <end position="918"/>
    </location>
</feature>
<feature type="short sequence motif" description="PPxY motif">
    <location>
        <begin position="551"/>
        <end position="554"/>
    </location>
</feature>
<feature type="short sequence motif" description="PPxY motif">
    <location>
        <begin position="570"/>
        <end position="573"/>
    </location>
</feature>
<feature type="compositionally biased region" description="Basic and acidic residues" evidence="4">
    <location>
        <begin position="136"/>
        <end position="148"/>
    </location>
</feature>
<feature type="compositionally biased region" description="Polar residues" evidence="4">
    <location>
        <begin position="153"/>
        <end position="164"/>
    </location>
</feature>
<feature type="compositionally biased region" description="Polar residues" evidence="4">
    <location>
        <begin position="188"/>
        <end position="200"/>
    </location>
</feature>
<feature type="compositionally biased region" description="Low complexity" evidence="4">
    <location>
        <begin position="214"/>
        <end position="232"/>
    </location>
</feature>
<feature type="compositionally biased region" description="Polar residues" evidence="4">
    <location>
        <begin position="282"/>
        <end position="293"/>
    </location>
</feature>
<feature type="compositionally biased region" description="Polar residues" evidence="4">
    <location>
        <begin position="309"/>
        <end position="370"/>
    </location>
</feature>
<feature type="compositionally biased region" description="Basic and acidic residues" evidence="4">
    <location>
        <begin position="373"/>
        <end position="384"/>
    </location>
</feature>
<feature type="compositionally biased region" description="Polar residues" evidence="4">
    <location>
        <begin position="556"/>
        <end position="568"/>
    </location>
</feature>
<feature type="compositionally biased region" description="Low complexity" evidence="4">
    <location>
        <begin position="569"/>
        <end position="580"/>
    </location>
</feature>
<feature type="compositionally biased region" description="Low complexity" evidence="4">
    <location>
        <begin position="816"/>
        <end position="841"/>
    </location>
</feature>
<feature type="compositionally biased region" description="Polar residues" evidence="4">
    <location>
        <begin position="874"/>
        <end position="895"/>
    </location>
</feature>
<feature type="modified residue" description="Phosphoserine" evidence="2">
    <location>
        <position position="134"/>
    </location>
</feature>
<feature type="modified residue" description="Phosphoserine" evidence="2">
    <location>
        <position position="202"/>
    </location>
</feature>
<feature type="modified residue" description="Phosphoserine" evidence="2">
    <location>
        <position position="222"/>
    </location>
</feature>
<feature type="modified residue" description="Phosphoserine" evidence="8">
    <location>
        <position position="258"/>
    </location>
</feature>
<feature type="modified residue" description="Phosphoserine" evidence="8">
    <location>
        <position position="490"/>
    </location>
</feature>
<feature type="modified residue" description="Phosphoserine" evidence="8">
    <location>
        <position position="514"/>
    </location>
</feature>
<feature type="modified residue" description="Phosphothreonine" evidence="8">
    <location>
        <position position="549"/>
    </location>
</feature>
<feature type="modified residue" description="Phosphoserine" evidence="3">
    <location>
        <position position="569"/>
    </location>
</feature>
<feature type="modified residue" description="Phosphoserine" evidence="3">
    <location>
        <position position="691"/>
    </location>
</feature>
<feature type="modified residue" description="Phosphoserine" evidence="3">
    <location>
        <position position="742"/>
    </location>
</feature>
<feature type="modified residue" description="Phosphoserine" evidence="2">
    <location>
        <position position="746"/>
    </location>
</feature>
<feature type="modified residue" description="Phosphoserine" evidence="8">
    <location>
        <position position="767"/>
    </location>
</feature>
<feature type="modified residue" description="Phosphothreonine" evidence="2">
    <location>
        <position position="771"/>
    </location>
</feature>
<feature type="modified residue" description="Phosphoserine" evidence="8">
    <location>
        <position position="835"/>
    </location>
</feature>
<feature type="modified residue" description="Omega-N-methylarginine" evidence="2">
    <location>
        <position position="850"/>
    </location>
</feature>
<feature type="modified residue" description="Phosphoserine" evidence="3">
    <location>
        <position position="856"/>
    </location>
</feature>
<feature type="splice variant" id="VSP_010480" description="In isoform 2 and isoform 3." evidence="7">
    <location>
        <begin position="1"/>
        <end position="239"/>
    </location>
</feature>
<feature type="splice variant" id="VSP_010481" description="In isoform 2." evidence="7">
    <original>VWKPSFCFK</original>
    <variation>DRPESLPTSPPWTPGASRPPSSLDGWIITSVGTCPEYSQELTACWMIPKEQKEPVMAVPGDLADPVPSLDLGKKLSVPQDLMIEELSLRNNRGSLLFQKRQRRVQKFTFELSESLQGILAGSARGKAAGRAAVATVPNGLEEQNHHSETHTHVFQGSPGDSGIAHPGAAGTGSVRSPSVLAPGYAEPLKGVPPEKFNHTAIPKGYRCPWQEFISYRDYYPSGSRSHTPIPRDYRNFNKTPVPFGGPHVGEAIFHAGTPFVPEPFSGLELLRLRPNFNRVAQGWVRKLPESEEL</variation>
    <location>
        <begin position="923"/>
        <end position="931"/>
    </location>
</feature>
<feature type="sequence conflict" description="In Ref. 1; BAA34925." evidence="7" ref="1">
    <original>A</original>
    <variation>V</variation>
    <location>
        <position position="561"/>
    </location>
</feature>
<feature type="sequence conflict" description="In Ref. 1; BAA34925." evidence="7" ref="1">
    <original>Q</original>
    <variation>R</variation>
    <location>
        <position position="566"/>
    </location>
</feature>
<feature type="sequence conflict" description="In Ref. 1; BAA34925." evidence="7" ref="1">
    <original>H</original>
    <variation>Y</variation>
    <location>
        <position position="797"/>
    </location>
</feature>
<feature type="sequence conflict" description="In Ref. 1; BAA34925." evidence="7" ref="1">
    <original>I</original>
    <variation>T</variation>
    <location>
        <position position="815"/>
    </location>
</feature>
<name>SYNPO_RAT</name>
<protein>
    <recommendedName>
        <fullName>Synaptopodin</fullName>
    </recommendedName>
</protein>
<accession>Q9Z327</accession>
<organism>
    <name type="scientific">Rattus norvegicus</name>
    <name type="common">Rat</name>
    <dbReference type="NCBI Taxonomy" id="10116"/>
    <lineage>
        <taxon>Eukaryota</taxon>
        <taxon>Metazoa</taxon>
        <taxon>Chordata</taxon>
        <taxon>Craniata</taxon>
        <taxon>Vertebrata</taxon>
        <taxon>Euteleostomi</taxon>
        <taxon>Mammalia</taxon>
        <taxon>Eutheria</taxon>
        <taxon>Euarchontoglires</taxon>
        <taxon>Glires</taxon>
        <taxon>Rodentia</taxon>
        <taxon>Myomorpha</taxon>
        <taxon>Muroidea</taxon>
        <taxon>Muridae</taxon>
        <taxon>Murinae</taxon>
        <taxon>Rattus</taxon>
    </lineage>
</organism>